<organism>
    <name type="scientific">Arabidopsis thaliana</name>
    <name type="common">Mouse-ear cress</name>
    <dbReference type="NCBI Taxonomy" id="3702"/>
    <lineage>
        <taxon>Eukaryota</taxon>
        <taxon>Viridiplantae</taxon>
        <taxon>Streptophyta</taxon>
        <taxon>Embryophyta</taxon>
        <taxon>Tracheophyta</taxon>
        <taxon>Spermatophyta</taxon>
        <taxon>Magnoliopsida</taxon>
        <taxon>eudicotyledons</taxon>
        <taxon>Gunneridae</taxon>
        <taxon>Pentapetalae</taxon>
        <taxon>rosids</taxon>
        <taxon>malvids</taxon>
        <taxon>Brassicales</taxon>
        <taxon>Brassicaceae</taxon>
        <taxon>Camelineae</taxon>
        <taxon>Arabidopsis</taxon>
    </lineage>
</organism>
<comment type="function">
    <text evidence="5 6">Protein kinase that regulates the auxin transport activity of PIN auxin efflux facilitators by direct phosphorylation. D6PK-mediated PIN phosphorylation promotes auxin transport in the hypocotyl and this is a prerequisite for PHOT1-dependent hypocotyl bending.</text>
</comment>
<comment type="catalytic activity">
    <reaction>
        <text>L-seryl-[protein] + ATP = O-phospho-L-seryl-[protein] + ADP + H(+)</text>
        <dbReference type="Rhea" id="RHEA:17989"/>
        <dbReference type="Rhea" id="RHEA-COMP:9863"/>
        <dbReference type="Rhea" id="RHEA-COMP:11604"/>
        <dbReference type="ChEBI" id="CHEBI:15378"/>
        <dbReference type="ChEBI" id="CHEBI:29999"/>
        <dbReference type="ChEBI" id="CHEBI:30616"/>
        <dbReference type="ChEBI" id="CHEBI:83421"/>
        <dbReference type="ChEBI" id="CHEBI:456216"/>
        <dbReference type="EC" id="2.7.11.1"/>
    </reaction>
</comment>
<comment type="catalytic activity">
    <reaction>
        <text>L-threonyl-[protein] + ATP = O-phospho-L-threonyl-[protein] + ADP + H(+)</text>
        <dbReference type="Rhea" id="RHEA:46608"/>
        <dbReference type="Rhea" id="RHEA-COMP:11060"/>
        <dbReference type="Rhea" id="RHEA-COMP:11605"/>
        <dbReference type="ChEBI" id="CHEBI:15378"/>
        <dbReference type="ChEBI" id="CHEBI:30013"/>
        <dbReference type="ChEBI" id="CHEBI:30616"/>
        <dbReference type="ChEBI" id="CHEBI:61977"/>
        <dbReference type="ChEBI" id="CHEBI:456216"/>
        <dbReference type="EC" id="2.7.11.1"/>
    </reaction>
</comment>
<comment type="interaction">
    <interactant intactId="EBI-1103605">
        <id>Q9SUA3</id>
    </interactant>
    <interactant intactId="EBI-4426649">
        <id>Q17TI5</id>
        <label>BRX</label>
    </interactant>
    <organismsDiffer>false</organismsDiffer>
    <experiments>3</experiments>
</comment>
<comment type="interaction">
    <interactant intactId="EBI-1103605">
        <id>Q9SUA3</id>
    </interactant>
    <interactant intactId="EBI-1103587">
        <id>Q9XF67</id>
        <label>PDPK1</label>
    </interactant>
    <organismsDiffer>false</organismsDiffer>
    <experiments>3</experiments>
</comment>
<comment type="subcellular location">
    <subcellularLocation>
        <location evidence="1">Cell membrane</location>
        <topology evidence="1">Peripheral membrane protein</topology>
    </subcellularLocation>
    <text evidence="1">Colocalizes with PIN1 to the basal (lower) membrane of root cells.</text>
</comment>
<comment type="domain">
    <text evidence="1">The activation loop within the kinase domain is the target of phosphorylation.</text>
</comment>
<comment type="disruption phenotype">
    <text evidence="5 6">No visible phenotype under normal growth conditions, but the quadruple d6pk, d6pkl1, d6pkl2 and d6pkl3 mutants are deficient in lateral root formation and mildly agravitropic, have fused or single cotyledons and narrow and twisted leaves, form few axillary shoots, are almost infertile and impaired in phototropic hypocotyl bending when exposed to lateral white light.</text>
</comment>
<comment type="similarity">
    <text evidence="7">Belongs to the protein kinase superfamily. AGC Ser/Thr protein kinase family.</text>
</comment>
<dbReference type="EC" id="2.7.11.1"/>
<dbReference type="EMBL" id="AL078465">
    <property type="protein sequence ID" value="CAB43857.1"/>
    <property type="molecule type" value="Genomic_DNA"/>
</dbReference>
<dbReference type="EMBL" id="AL161565">
    <property type="protein sequence ID" value="CAB79516.1"/>
    <property type="molecule type" value="Genomic_DNA"/>
</dbReference>
<dbReference type="EMBL" id="CP002687">
    <property type="protein sequence ID" value="AEE85226.1"/>
    <property type="molecule type" value="Genomic_DNA"/>
</dbReference>
<dbReference type="EMBL" id="AY063923">
    <property type="protein sequence ID" value="AAL36279.1"/>
    <property type="molecule type" value="mRNA"/>
</dbReference>
<dbReference type="EMBL" id="AY091248">
    <property type="protein sequence ID" value="AAM14187.1"/>
    <property type="molecule type" value="mRNA"/>
</dbReference>
<dbReference type="EMBL" id="AK230357">
    <property type="protein sequence ID" value="BAF02156.1"/>
    <property type="molecule type" value="mRNA"/>
</dbReference>
<dbReference type="PIR" id="T08927">
    <property type="entry name" value="T08927"/>
</dbReference>
<dbReference type="RefSeq" id="NP_194391.1">
    <property type="nucleotide sequence ID" value="NM_118795.4"/>
</dbReference>
<dbReference type="SMR" id="Q9SUA3"/>
<dbReference type="BioGRID" id="14055">
    <property type="interactions" value="2"/>
</dbReference>
<dbReference type="FunCoup" id="Q9SUA3">
    <property type="interactions" value="894"/>
</dbReference>
<dbReference type="IntAct" id="Q9SUA3">
    <property type="interactions" value="2"/>
</dbReference>
<dbReference type="STRING" id="3702.Q9SUA3"/>
<dbReference type="GlyGen" id="Q9SUA3">
    <property type="glycosylation" value="1 site"/>
</dbReference>
<dbReference type="iPTMnet" id="Q9SUA3"/>
<dbReference type="PaxDb" id="3702-AT4G26610.1"/>
<dbReference type="ProteomicsDB" id="224660"/>
<dbReference type="EnsemblPlants" id="AT4G26610.1">
    <property type="protein sequence ID" value="AT4G26610.1"/>
    <property type="gene ID" value="AT4G26610"/>
</dbReference>
<dbReference type="GeneID" id="828768"/>
<dbReference type="Gramene" id="AT4G26610.1">
    <property type="protein sequence ID" value="AT4G26610.1"/>
    <property type="gene ID" value="AT4G26610"/>
</dbReference>
<dbReference type="KEGG" id="ath:AT4G26610"/>
<dbReference type="Araport" id="AT4G26610"/>
<dbReference type="TAIR" id="AT4G26610">
    <property type="gene designation" value="D6PKL1"/>
</dbReference>
<dbReference type="eggNOG" id="KOG0610">
    <property type="taxonomic scope" value="Eukaryota"/>
</dbReference>
<dbReference type="HOGENOM" id="CLU_000288_63_30_1"/>
<dbReference type="InParanoid" id="Q9SUA3"/>
<dbReference type="OMA" id="KSNTCRP"/>
<dbReference type="PhylomeDB" id="Q9SUA3"/>
<dbReference type="PRO" id="PR:Q9SUA3"/>
<dbReference type="Proteomes" id="UP000006548">
    <property type="component" value="Chromosome 4"/>
</dbReference>
<dbReference type="ExpressionAtlas" id="Q9SUA3">
    <property type="expression patterns" value="baseline and differential"/>
</dbReference>
<dbReference type="GO" id="GO:0005886">
    <property type="term" value="C:plasma membrane"/>
    <property type="evidence" value="ECO:0007669"/>
    <property type="project" value="UniProtKB-SubCell"/>
</dbReference>
<dbReference type="GO" id="GO:0005524">
    <property type="term" value="F:ATP binding"/>
    <property type="evidence" value="ECO:0007669"/>
    <property type="project" value="UniProtKB-KW"/>
</dbReference>
<dbReference type="GO" id="GO:0016301">
    <property type="term" value="F:kinase activity"/>
    <property type="evidence" value="ECO:0000250"/>
    <property type="project" value="TAIR"/>
</dbReference>
<dbReference type="GO" id="GO:0004672">
    <property type="term" value="F:protein kinase activity"/>
    <property type="evidence" value="ECO:0000304"/>
    <property type="project" value="UniProtKB"/>
</dbReference>
<dbReference type="GO" id="GO:0106310">
    <property type="term" value="F:protein serine kinase activity"/>
    <property type="evidence" value="ECO:0007669"/>
    <property type="project" value="RHEA"/>
</dbReference>
<dbReference type="GO" id="GO:0004674">
    <property type="term" value="F:protein serine/threonine kinase activity"/>
    <property type="evidence" value="ECO:0007669"/>
    <property type="project" value="UniProtKB-KW"/>
</dbReference>
<dbReference type="GO" id="GO:0009734">
    <property type="term" value="P:auxin-activated signaling pathway"/>
    <property type="evidence" value="ECO:0007669"/>
    <property type="project" value="UniProtKB-KW"/>
</dbReference>
<dbReference type="GO" id="GO:0010540">
    <property type="term" value="P:basipetal auxin transport"/>
    <property type="evidence" value="ECO:0000304"/>
    <property type="project" value="UniProtKB"/>
</dbReference>
<dbReference type="GO" id="GO:0009638">
    <property type="term" value="P:phototropism"/>
    <property type="evidence" value="ECO:0000315"/>
    <property type="project" value="TAIR"/>
</dbReference>
<dbReference type="GO" id="GO:0006468">
    <property type="term" value="P:protein phosphorylation"/>
    <property type="evidence" value="ECO:0000304"/>
    <property type="project" value="UniProtKB"/>
</dbReference>
<dbReference type="CDD" id="cd05574">
    <property type="entry name" value="STKc_phototropin_like"/>
    <property type="match status" value="1"/>
</dbReference>
<dbReference type="FunFam" id="1.10.510.10:FF:000295">
    <property type="entry name" value="Serine/threonine-protein kinase AGC1-7"/>
    <property type="match status" value="1"/>
</dbReference>
<dbReference type="FunFam" id="3.30.200.20:FF:000032">
    <property type="entry name" value="Serine/threonine-protein kinase D6PK-like"/>
    <property type="match status" value="1"/>
</dbReference>
<dbReference type="FunFam" id="1.10.510.10:FF:000028">
    <property type="entry name" value="serine/threonine-protein kinase D6PK-like"/>
    <property type="match status" value="1"/>
</dbReference>
<dbReference type="Gene3D" id="3.30.200.20">
    <property type="entry name" value="Phosphorylase Kinase, domain 1"/>
    <property type="match status" value="1"/>
</dbReference>
<dbReference type="Gene3D" id="1.10.510.10">
    <property type="entry name" value="Transferase(Phosphotransferase) domain 1"/>
    <property type="match status" value="2"/>
</dbReference>
<dbReference type="InterPro" id="IPR011009">
    <property type="entry name" value="Kinase-like_dom_sf"/>
</dbReference>
<dbReference type="InterPro" id="IPR000719">
    <property type="entry name" value="Prot_kinase_dom"/>
</dbReference>
<dbReference type="InterPro" id="IPR008271">
    <property type="entry name" value="Ser/Thr_kinase_AS"/>
</dbReference>
<dbReference type="PANTHER" id="PTHR45637">
    <property type="entry name" value="FLIPPASE KINASE 1-RELATED"/>
    <property type="match status" value="1"/>
</dbReference>
<dbReference type="Pfam" id="PF00069">
    <property type="entry name" value="Pkinase"/>
    <property type="match status" value="2"/>
</dbReference>
<dbReference type="SMART" id="SM00220">
    <property type="entry name" value="S_TKc"/>
    <property type="match status" value="1"/>
</dbReference>
<dbReference type="SUPFAM" id="SSF56112">
    <property type="entry name" value="Protein kinase-like (PK-like)"/>
    <property type="match status" value="1"/>
</dbReference>
<dbReference type="PROSITE" id="PS50011">
    <property type="entry name" value="PROTEIN_KINASE_DOM"/>
    <property type="match status" value="1"/>
</dbReference>
<dbReference type="PROSITE" id="PS00108">
    <property type="entry name" value="PROTEIN_KINASE_ST"/>
    <property type="match status" value="1"/>
</dbReference>
<evidence type="ECO:0000250" key="1"/>
<evidence type="ECO:0000255" key="2">
    <source>
        <dbReference type="PROSITE-ProRule" id="PRU00159"/>
    </source>
</evidence>
<evidence type="ECO:0000255" key="3">
    <source>
        <dbReference type="PROSITE-ProRule" id="PRU10027"/>
    </source>
</evidence>
<evidence type="ECO:0000256" key="4">
    <source>
        <dbReference type="SAM" id="MobiDB-lite"/>
    </source>
</evidence>
<evidence type="ECO:0000269" key="5">
    <source>
    </source>
</evidence>
<evidence type="ECO:0000269" key="6">
    <source>
    </source>
</evidence>
<evidence type="ECO:0000305" key="7"/>
<accession>Q9SUA3</accession>
<accession>Q0WL51</accession>
<proteinExistence type="evidence at protein level"/>
<gene>
    <name type="primary">D6PKL1</name>
    <name type="ordered locus">At4g26610</name>
    <name type="ORF">T15N24.60</name>
</gene>
<reference key="1">
    <citation type="journal article" date="1999" name="Nature">
        <title>Sequence and analysis of chromosome 4 of the plant Arabidopsis thaliana.</title>
        <authorList>
            <person name="Mayer K.F.X."/>
            <person name="Schueller C."/>
            <person name="Wambutt R."/>
            <person name="Murphy G."/>
            <person name="Volckaert G."/>
            <person name="Pohl T."/>
            <person name="Duesterhoeft A."/>
            <person name="Stiekema W."/>
            <person name="Entian K.-D."/>
            <person name="Terryn N."/>
            <person name="Harris B."/>
            <person name="Ansorge W."/>
            <person name="Brandt P."/>
            <person name="Grivell L.A."/>
            <person name="Rieger M."/>
            <person name="Weichselgartner M."/>
            <person name="de Simone V."/>
            <person name="Obermaier B."/>
            <person name="Mache R."/>
            <person name="Mueller M."/>
            <person name="Kreis M."/>
            <person name="Delseny M."/>
            <person name="Puigdomenech P."/>
            <person name="Watson M."/>
            <person name="Schmidtheini T."/>
            <person name="Reichert B."/>
            <person name="Portetelle D."/>
            <person name="Perez-Alonso M."/>
            <person name="Boutry M."/>
            <person name="Bancroft I."/>
            <person name="Vos P."/>
            <person name="Hoheisel J."/>
            <person name="Zimmermann W."/>
            <person name="Wedler H."/>
            <person name="Ridley P."/>
            <person name="Langham S.-A."/>
            <person name="McCullagh B."/>
            <person name="Bilham L."/>
            <person name="Robben J."/>
            <person name="van der Schueren J."/>
            <person name="Grymonprez B."/>
            <person name="Chuang Y.-J."/>
            <person name="Vandenbussche F."/>
            <person name="Braeken M."/>
            <person name="Weltjens I."/>
            <person name="Voet M."/>
            <person name="Bastiaens I."/>
            <person name="Aert R."/>
            <person name="Defoor E."/>
            <person name="Weitzenegger T."/>
            <person name="Bothe G."/>
            <person name="Ramsperger U."/>
            <person name="Hilbert H."/>
            <person name="Braun M."/>
            <person name="Holzer E."/>
            <person name="Brandt A."/>
            <person name="Peters S."/>
            <person name="van Staveren M."/>
            <person name="Dirkse W."/>
            <person name="Mooijman P."/>
            <person name="Klein Lankhorst R."/>
            <person name="Rose M."/>
            <person name="Hauf J."/>
            <person name="Koetter P."/>
            <person name="Berneiser S."/>
            <person name="Hempel S."/>
            <person name="Feldpausch M."/>
            <person name="Lamberth S."/>
            <person name="Van den Daele H."/>
            <person name="De Keyser A."/>
            <person name="Buysshaert C."/>
            <person name="Gielen J."/>
            <person name="Villarroel R."/>
            <person name="De Clercq R."/>
            <person name="van Montagu M."/>
            <person name="Rogers J."/>
            <person name="Cronin A."/>
            <person name="Quail M.A."/>
            <person name="Bray-Allen S."/>
            <person name="Clark L."/>
            <person name="Doggett J."/>
            <person name="Hall S."/>
            <person name="Kay M."/>
            <person name="Lennard N."/>
            <person name="McLay K."/>
            <person name="Mayes R."/>
            <person name="Pettett A."/>
            <person name="Rajandream M.A."/>
            <person name="Lyne M."/>
            <person name="Benes V."/>
            <person name="Rechmann S."/>
            <person name="Borkova D."/>
            <person name="Bloecker H."/>
            <person name="Scharfe M."/>
            <person name="Grimm M."/>
            <person name="Loehnert T.-H."/>
            <person name="Dose S."/>
            <person name="de Haan M."/>
            <person name="Maarse A.C."/>
            <person name="Schaefer M."/>
            <person name="Mueller-Auer S."/>
            <person name="Gabel C."/>
            <person name="Fuchs M."/>
            <person name="Fartmann B."/>
            <person name="Granderath K."/>
            <person name="Dauner D."/>
            <person name="Herzl A."/>
            <person name="Neumann S."/>
            <person name="Argiriou A."/>
            <person name="Vitale D."/>
            <person name="Liguori R."/>
            <person name="Piravandi E."/>
            <person name="Massenet O."/>
            <person name="Quigley F."/>
            <person name="Clabauld G."/>
            <person name="Muendlein A."/>
            <person name="Felber R."/>
            <person name="Schnabl S."/>
            <person name="Hiller R."/>
            <person name="Schmidt W."/>
            <person name="Lecharny A."/>
            <person name="Aubourg S."/>
            <person name="Chefdor F."/>
            <person name="Cooke R."/>
            <person name="Berger C."/>
            <person name="Monfort A."/>
            <person name="Casacuberta E."/>
            <person name="Gibbons T."/>
            <person name="Weber N."/>
            <person name="Vandenbol M."/>
            <person name="Bargues M."/>
            <person name="Terol J."/>
            <person name="Torres A."/>
            <person name="Perez-Perez A."/>
            <person name="Purnelle B."/>
            <person name="Bent E."/>
            <person name="Johnson S."/>
            <person name="Tacon D."/>
            <person name="Jesse T."/>
            <person name="Heijnen L."/>
            <person name="Schwarz S."/>
            <person name="Scholler P."/>
            <person name="Heber S."/>
            <person name="Francs P."/>
            <person name="Bielke C."/>
            <person name="Frishman D."/>
            <person name="Haase D."/>
            <person name="Lemcke K."/>
            <person name="Mewes H.-W."/>
            <person name="Stocker S."/>
            <person name="Zaccaria P."/>
            <person name="Bevan M."/>
            <person name="Wilson R.K."/>
            <person name="de la Bastide M."/>
            <person name="Habermann K."/>
            <person name="Parnell L."/>
            <person name="Dedhia N."/>
            <person name="Gnoj L."/>
            <person name="Schutz K."/>
            <person name="Huang E."/>
            <person name="Spiegel L."/>
            <person name="Sekhon M."/>
            <person name="Murray J."/>
            <person name="Sheet P."/>
            <person name="Cordes M."/>
            <person name="Abu-Threideh J."/>
            <person name="Stoneking T."/>
            <person name="Kalicki J."/>
            <person name="Graves T."/>
            <person name="Harmon G."/>
            <person name="Edwards J."/>
            <person name="Latreille P."/>
            <person name="Courtney L."/>
            <person name="Cloud J."/>
            <person name="Abbott A."/>
            <person name="Scott K."/>
            <person name="Johnson D."/>
            <person name="Minx P."/>
            <person name="Bentley D."/>
            <person name="Fulton B."/>
            <person name="Miller N."/>
            <person name="Greco T."/>
            <person name="Kemp K."/>
            <person name="Kramer J."/>
            <person name="Fulton L."/>
            <person name="Mardis E."/>
            <person name="Dante M."/>
            <person name="Pepin K."/>
            <person name="Hillier L.W."/>
            <person name="Nelson J."/>
            <person name="Spieth J."/>
            <person name="Ryan E."/>
            <person name="Andrews S."/>
            <person name="Geisel C."/>
            <person name="Layman D."/>
            <person name="Du H."/>
            <person name="Ali J."/>
            <person name="Berghoff A."/>
            <person name="Jones K."/>
            <person name="Drone K."/>
            <person name="Cotton M."/>
            <person name="Joshu C."/>
            <person name="Antonoiu B."/>
            <person name="Zidanic M."/>
            <person name="Strong C."/>
            <person name="Sun H."/>
            <person name="Lamar B."/>
            <person name="Yordan C."/>
            <person name="Ma P."/>
            <person name="Zhong J."/>
            <person name="Preston R."/>
            <person name="Vil D."/>
            <person name="Shekher M."/>
            <person name="Matero A."/>
            <person name="Shah R."/>
            <person name="Swaby I.K."/>
            <person name="O'Shaughnessy A."/>
            <person name="Rodriguez M."/>
            <person name="Hoffman J."/>
            <person name="Till S."/>
            <person name="Granat S."/>
            <person name="Shohdy N."/>
            <person name="Hasegawa A."/>
            <person name="Hameed A."/>
            <person name="Lodhi M."/>
            <person name="Johnson A."/>
            <person name="Chen E."/>
            <person name="Marra M.A."/>
            <person name="Martienssen R."/>
            <person name="McCombie W.R."/>
        </authorList>
    </citation>
    <scope>NUCLEOTIDE SEQUENCE [LARGE SCALE GENOMIC DNA]</scope>
    <source>
        <strain>cv. Columbia</strain>
    </source>
</reference>
<reference key="2">
    <citation type="journal article" date="2017" name="Plant J.">
        <title>Araport11: a complete reannotation of the Arabidopsis thaliana reference genome.</title>
        <authorList>
            <person name="Cheng C.Y."/>
            <person name="Krishnakumar V."/>
            <person name="Chan A.P."/>
            <person name="Thibaud-Nissen F."/>
            <person name="Schobel S."/>
            <person name="Town C.D."/>
        </authorList>
    </citation>
    <scope>GENOME REANNOTATION</scope>
    <source>
        <strain>cv. Columbia</strain>
    </source>
</reference>
<reference key="3">
    <citation type="journal article" date="2003" name="Science">
        <title>Empirical analysis of transcriptional activity in the Arabidopsis genome.</title>
        <authorList>
            <person name="Yamada K."/>
            <person name="Lim J."/>
            <person name="Dale J.M."/>
            <person name="Chen H."/>
            <person name="Shinn P."/>
            <person name="Palm C.J."/>
            <person name="Southwick A.M."/>
            <person name="Wu H.C."/>
            <person name="Kim C.J."/>
            <person name="Nguyen M."/>
            <person name="Pham P.K."/>
            <person name="Cheuk R.F."/>
            <person name="Karlin-Newmann G."/>
            <person name="Liu S.X."/>
            <person name="Lam B."/>
            <person name="Sakano H."/>
            <person name="Wu T."/>
            <person name="Yu G."/>
            <person name="Miranda M."/>
            <person name="Quach H.L."/>
            <person name="Tripp M."/>
            <person name="Chang C.H."/>
            <person name="Lee J.M."/>
            <person name="Toriumi M.J."/>
            <person name="Chan M.M."/>
            <person name="Tang C.C."/>
            <person name="Onodera C.S."/>
            <person name="Deng J.M."/>
            <person name="Akiyama K."/>
            <person name="Ansari Y."/>
            <person name="Arakawa T."/>
            <person name="Banh J."/>
            <person name="Banno F."/>
            <person name="Bowser L."/>
            <person name="Brooks S.Y."/>
            <person name="Carninci P."/>
            <person name="Chao Q."/>
            <person name="Choy N."/>
            <person name="Enju A."/>
            <person name="Goldsmith A.D."/>
            <person name="Gurjal M."/>
            <person name="Hansen N.F."/>
            <person name="Hayashizaki Y."/>
            <person name="Johnson-Hopson C."/>
            <person name="Hsuan V.W."/>
            <person name="Iida K."/>
            <person name="Karnes M."/>
            <person name="Khan S."/>
            <person name="Koesema E."/>
            <person name="Ishida J."/>
            <person name="Jiang P.X."/>
            <person name="Jones T."/>
            <person name="Kawai J."/>
            <person name="Kamiya A."/>
            <person name="Meyers C."/>
            <person name="Nakajima M."/>
            <person name="Narusaka M."/>
            <person name="Seki M."/>
            <person name="Sakurai T."/>
            <person name="Satou M."/>
            <person name="Tamse R."/>
            <person name="Vaysberg M."/>
            <person name="Wallender E.K."/>
            <person name="Wong C."/>
            <person name="Yamamura Y."/>
            <person name="Yuan S."/>
            <person name="Shinozaki K."/>
            <person name="Davis R.W."/>
            <person name="Theologis A."/>
            <person name="Ecker J.R."/>
        </authorList>
    </citation>
    <scope>NUCLEOTIDE SEQUENCE [LARGE SCALE MRNA]</scope>
    <source>
        <strain>cv. Columbia</strain>
    </source>
</reference>
<reference key="4">
    <citation type="submission" date="2006-07" db="EMBL/GenBank/DDBJ databases">
        <title>Large-scale analysis of RIKEN Arabidopsis full-length (RAFL) cDNAs.</title>
        <authorList>
            <person name="Totoki Y."/>
            <person name="Seki M."/>
            <person name="Ishida J."/>
            <person name="Nakajima M."/>
            <person name="Enju A."/>
            <person name="Kamiya A."/>
            <person name="Narusaka M."/>
            <person name="Shin-i T."/>
            <person name="Nakagawa M."/>
            <person name="Sakamoto N."/>
            <person name="Oishi K."/>
            <person name="Kohara Y."/>
            <person name="Kobayashi M."/>
            <person name="Toyoda A."/>
            <person name="Sakaki Y."/>
            <person name="Sakurai T."/>
            <person name="Iida K."/>
            <person name="Akiyama K."/>
            <person name="Satou M."/>
            <person name="Toyoda T."/>
            <person name="Konagaya A."/>
            <person name="Carninci P."/>
            <person name="Kawai J."/>
            <person name="Hayashizaki Y."/>
            <person name="Shinozaki K."/>
        </authorList>
    </citation>
    <scope>NUCLEOTIDE SEQUENCE [LARGE SCALE MRNA]</scope>
    <source>
        <strain>cv. Columbia</strain>
    </source>
</reference>
<reference key="5">
    <citation type="journal article" date="2009" name="Development">
        <title>The polarly localized D6 PROTEIN KINASE is required for efficient auxin transport in Arabidopsis thaliana.</title>
        <authorList>
            <person name="Zourelidou M."/>
            <person name="Muller I."/>
            <person name="Willige B.C."/>
            <person name="Nill C."/>
            <person name="Jikumaru Y."/>
            <person name="Li H."/>
            <person name="Schwechheimer C."/>
        </authorList>
    </citation>
    <scope>FUNCTION</scope>
    <scope>DISRUPTION PHENOTYPE</scope>
</reference>
<reference key="6">
    <citation type="journal article" date="2013" name="Plant Cell">
        <title>D6PK AGCVIII kinases are required for auxin transport and phototropic hypocotyl bending in Arabidopsis.</title>
        <authorList>
            <person name="Willige B.C."/>
            <person name="Ahlers S."/>
            <person name="Zourelidou M."/>
            <person name="Barbosa I.C."/>
            <person name="Demarsy E."/>
            <person name="Trevisan M."/>
            <person name="Davis P.A."/>
            <person name="Roelfsema M.R."/>
            <person name="Hangarter R."/>
            <person name="Fankhauser C."/>
            <person name="Schwechheimer C."/>
        </authorList>
    </citation>
    <scope>FUNCTION</scope>
    <scope>DISRUPTION PHENOTYPE</scope>
</reference>
<protein>
    <recommendedName>
        <fullName>Serine/threonine-protein kinase D6PKL1</fullName>
        <ecNumber>2.7.11.1</ecNumber>
    </recommendedName>
    <alternativeName>
        <fullName>Serine/threonine-protein kinase AGC1-2</fullName>
    </alternativeName>
</protein>
<feature type="chain" id="PRO_0000430036" description="Serine/threonine-protein kinase D6PKL1">
    <location>
        <begin position="1"/>
        <end position="506"/>
    </location>
</feature>
<feature type="domain" description="Protein kinase" evidence="2">
    <location>
        <begin position="123"/>
        <end position="456"/>
    </location>
</feature>
<feature type="region of interest" description="Disordered" evidence="4">
    <location>
        <begin position="1"/>
        <end position="96"/>
    </location>
</feature>
<feature type="region of interest" description="Disordered" evidence="4">
    <location>
        <begin position="475"/>
        <end position="495"/>
    </location>
</feature>
<feature type="compositionally biased region" description="Basic and acidic residues" evidence="4">
    <location>
        <begin position="12"/>
        <end position="23"/>
    </location>
</feature>
<feature type="compositionally biased region" description="Polar residues" evidence="4">
    <location>
        <begin position="24"/>
        <end position="54"/>
    </location>
</feature>
<feature type="compositionally biased region" description="Basic and acidic residues" evidence="4">
    <location>
        <begin position="55"/>
        <end position="67"/>
    </location>
</feature>
<feature type="compositionally biased region" description="Low complexity" evidence="4">
    <location>
        <begin position="77"/>
        <end position="92"/>
    </location>
</feature>
<feature type="compositionally biased region" description="Low complexity" evidence="4">
    <location>
        <begin position="480"/>
        <end position="492"/>
    </location>
</feature>
<feature type="active site" description="Proton acceptor" evidence="2 3">
    <location>
        <position position="248"/>
    </location>
</feature>
<feature type="binding site" evidence="2">
    <location>
        <begin position="129"/>
        <end position="137"/>
    </location>
    <ligand>
        <name>ATP</name>
        <dbReference type="ChEBI" id="CHEBI:30616"/>
    </ligand>
</feature>
<feature type="binding site" evidence="2">
    <location>
        <position position="152"/>
    </location>
    <ligand>
        <name>ATP</name>
        <dbReference type="ChEBI" id="CHEBI:30616"/>
    </ligand>
</feature>
<feature type="sequence conflict" description="In Ref. 4; BAF02156." evidence="7" ref="4">
    <original>N</original>
    <variation>D</variation>
    <location>
        <position position="95"/>
    </location>
</feature>
<sequence length="506" mass="55947">MASKYGSGVLPENKKEKGDKETPETSYSSQSVSVNTLADQVSSTLSFAPSSDSKTGGEVKFNEKSDQSGKSNTCRPSTSSDISDESTCSSFSGNNKPHKANDVRWEAIQAVRTKHGVLGLNHFRLLKRLGCGDIGTVHLAELHGTRCFFAMKVMDKGALASRKKLLRAQTEREILQCLDHPFLPTLYSHFETEKFSCLVMEFCPGGDLHTLRQRQPGKRFSEQAAKFYVAEVLLAMEYLHMLGIIYRDLKPENVLVRDDGHVMLSDFDLSLRCTVSPTVVRSTVLASEGQKNSGYCAQPACIQQPSCISAPTTCFSPRYFSSKSKKDKKMKNETGNQVSPLPELVAEPTSARSMSFVGTHEYLAPEIIKGEGHGSAVDWWTFGIFLYELLFGKTPFKGSGNRATLFNVVGQPLRFPESPVVSFAARDLIRSLLVKEPQHRLAYKRGATEMKQHPFFEGVNWALVRCASPPEIPKPVDYESAPATPAAATSTSVKSDQSNYLEFDFF</sequence>
<name>D6KL1_ARATH</name>
<keyword id="KW-0067">ATP-binding</keyword>
<keyword id="KW-0927">Auxin signaling pathway</keyword>
<keyword id="KW-1003">Cell membrane</keyword>
<keyword id="KW-0418">Kinase</keyword>
<keyword id="KW-0472">Membrane</keyword>
<keyword id="KW-0547">Nucleotide-binding</keyword>
<keyword id="KW-1185">Reference proteome</keyword>
<keyword id="KW-0723">Serine/threonine-protein kinase</keyword>
<keyword id="KW-0808">Transferase</keyword>